<protein>
    <recommendedName>
        <fullName evidence="1">Dihydroorotase</fullName>
        <shortName evidence="1">DHOase</shortName>
        <ecNumber evidence="1">3.5.2.3</ecNumber>
    </recommendedName>
</protein>
<keyword id="KW-0378">Hydrolase</keyword>
<keyword id="KW-0479">Metal-binding</keyword>
<keyword id="KW-0665">Pyrimidine biosynthesis</keyword>
<keyword id="KW-1185">Reference proteome</keyword>
<keyword id="KW-0862">Zinc</keyword>
<dbReference type="EC" id="3.5.2.3" evidence="1"/>
<dbReference type="EMBL" id="AE017125">
    <property type="protein sequence ID" value="AAP77211.1"/>
    <property type="molecule type" value="Genomic_DNA"/>
</dbReference>
<dbReference type="RefSeq" id="WP_011115456.1">
    <property type="nucleotide sequence ID" value="NC_004917.1"/>
</dbReference>
<dbReference type="SMR" id="Q7VIJ1"/>
<dbReference type="STRING" id="235279.HH_0614"/>
<dbReference type="KEGG" id="hhe:HH_0614"/>
<dbReference type="eggNOG" id="COG0418">
    <property type="taxonomic scope" value="Bacteria"/>
</dbReference>
<dbReference type="HOGENOM" id="CLU_041558_0_0_7"/>
<dbReference type="OrthoDB" id="9808095at2"/>
<dbReference type="UniPathway" id="UPA00070">
    <property type="reaction ID" value="UER00117"/>
</dbReference>
<dbReference type="Proteomes" id="UP000002495">
    <property type="component" value="Chromosome"/>
</dbReference>
<dbReference type="GO" id="GO:0005829">
    <property type="term" value="C:cytosol"/>
    <property type="evidence" value="ECO:0007669"/>
    <property type="project" value="TreeGrafter"/>
</dbReference>
<dbReference type="GO" id="GO:0004151">
    <property type="term" value="F:dihydroorotase activity"/>
    <property type="evidence" value="ECO:0007669"/>
    <property type="project" value="UniProtKB-UniRule"/>
</dbReference>
<dbReference type="GO" id="GO:0008270">
    <property type="term" value="F:zinc ion binding"/>
    <property type="evidence" value="ECO:0007669"/>
    <property type="project" value="UniProtKB-UniRule"/>
</dbReference>
<dbReference type="GO" id="GO:0006207">
    <property type="term" value="P:'de novo' pyrimidine nucleobase biosynthetic process"/>
    <property type="evidence" value="ECO:0007669"/>
    <property type="project" value="TreeGrafter"/>
</dbReference>
<dbReference type="GO" id="GO:0044205">
    <property type="term" value="P:'de novo' UMP biosynthetic process"/>
    <property type="evidence" value="ECO:0007669"/>
    <property type="project" value="UniProtKB-UniRule"/>
</dbReference>
<dbReference type="Gene3D" id="3.20.20.140">
    <property type="entry name" value="Metal-dependent hydrolases"/>
    <property type="match status" value="1"/>
</dbReference>
<dbReference type="HAMAP" id="MF_00219">
    <property type="entry name" value="PyrC_classII"/>
    <property type="match status" value="1"/>
</dbReference>
<dbReference type="InterPro" id="IPR006680">
    <property type="entry name" value="Amidohydro-rel"/>
</dbReference>
<dbReference type="InterPro" id="IPR004721">
    <property type="entry name" value="DHOdimr"/>
</dbReference>
<dbReference type="InterPro" id="IPR002195">
    <property type="entry name" value="Dihydroorotase_CS"/>
</dbReference>
<dbReference type="InterPro" id="IPR032466">
    <property type="entry name" value="Metal_Hydrolase"/>
</dbReference>
<dbReference type="NCBIfam" id="TIGR00856">
    <property type="entry name" value="pyrC_dimer"/>
    <property type="match status" value="1"/>
</dbReference>
<dbReference type="PANTHER" id="PTHR43137">
    <property type="entry name" value="DIHYDROOROTASE"/>
    <property type="match status" value="1"/>
</dbReference>
<dbReference type="PANTHER" id="PTHR43137:SF1">
    <property type="entry name" value="DIHYDROOROTASE"/>
    <property type="match status" value="1"/>
</dbReference>
<dbReference type="Pfam" id="PF04909">
    <property type="entry name" value="Amidohydro_2"/>
    <property type="match status" value="1"/>
</dbReference>
<dbReference type="PIRSF" id="PIRSF001237">
    <property type="entry name" value="DHOdimr"/>
    <property type="match status" value="1"/>
</dbReference>
<dbReference type="SUPFAM" id="SSF51556">
    <property type="entry name" value="Metallo-dependent hydrolases"/>
    <property type="match status" value="1"/>
</dbReference>
<dbReference type="PROSITE" id="PS00482">
    <property type="entry name" value="DIHYDROOROTASE_1"/>
    <property type="match status" value="1"/>
</dbReference>
<dbReference type="PROSITE" id="PS00483">
    <property type="entry name" value="DIHYDROOROTASE_2"/>
    <property type="match status" value="1"/>
</dbReference>
<evidence type="ECO:0000255" key="1">
    <source>
        <dbReference type="HAMAP-Rule" id="MF_00219"/>
    </source>
</evidence>
<organism>
    <name type="scientific">Helicobacter hepaticus (strain ATCC 51449 / 3B1)</name>
    <dbReference type="NCBI Taxonomy" id="235279"/>
    <lineage>
        <taxon>Bacteria</taxon>
        <taxon>Pseudomonadati</taxon>
        <taxon>Campylobacterota</taxon>
        <taxon>Epsilonproteobacteria</taxon>
        <taxon>Campylobacterales</taxon>
        <taxon>Helicobacteraceae</taxon>
        <taxon>Helicobacter</taxon>
    </lineage>
</organism>
<accession>Q7VIJ1</accession>
<proteinExistence type="inferred from homology"/>
<feature type="chain" id="PRO_0000325572" description="Dihydroorotase">
    <location>
        <begin position="1"/>
        <end position="343"/>
    </location>
</feature>
<feature type="active site" evidence="1">
    <location>
        <position position="242"/>
    </location>
</feature>
<feature type="binding site" evidence="1">
    <location>
        <position position="14"/>
    </location>
    <ligand>
        <name>Zn(2+)</name>
        <dbReference type="ChEBI" id="CHEBI:29105"/>
        <label>1</label>
    </ligand>
</feature>
<feature type="binding site" evidence="1">
    <location>
        <begin position="16"/>
        <end position="18"/>
    </location>
    <ligand>
        <name>substrate</name>
    </ligand>
</feature>
<feature type="binding site" evidence="1">
    <location>
        <position position="16"/>
    </location>
    <ligand>
        <name>Zn(2+)</name>
        <dbReference type="ChEBI" id="CHEBI:29105"/>
        <label>1</label>
    </ligand>
</feature>
<feature type="binding site" evidence="1">
    <location>
        <position position="42"/>
    </location>
    <ligand>
        <name>substrate</name>
    </ligand>
</feature>
<feature type="binding site" description="via carbamate group" evidence="1">
    <location>
        <position position="97"/>
    </location>
    <ligand>
        <name>Zn(2+)</name>
        <dbReference type="ChEBI" id="CHEBI:29105"/>
        <label>1</label>
    </ligand>
</feature>
<feature type="binding site" description="via carbamate group" evidence="1">
    <location>
        <position position="97"/>
    </location>
    <ligand>
        <name>Zn(2+)</name>
        <dbReference type="ChEBI" id="CHEBI:29105"/>
        <label>2</label>
    </ligand>
</feature>
<feature type="binding site" evidence="1">
    <location>
        <position position="136"/>
    </location>
    <ligand>
        <name>substrate</name>
    </ligand>
</feature>
<feature type="binding site" evidence="1">
    <location>
        <position position="136"/>
    </location>
    <ligand>
        <name>Zn(2+)</name>
        <dbReference type="ChEBI" id="CHEBI:29105"/>
        <label>2</label>
    </ligand>
</feature>
<feature type="binding site" evidence="1">
    <location>
        <position position="170"/>
    </location>
    <ligand>
        <name>Zn(2+)</name>
        <dbReference type="ChEBI" id="CHEBI:29105"/>
        <label>2</label>
    </ligand>
</feature>
<feature type="binding site" evidence="1">
    <location>
        <position position="242"/>
    </location>
    <ligand>
        <name>Zn(2+)</name>
        <dbReference type="ChEBI" id="CHEBI:29105"/>
        <label>1</label>
    </ligand>
</feature>
<feature type="binding site" evidence="1">
    <location>
        <position position="246"/>
    </location>
    <ligand>
        <name>substrate</name>
    </ligand>
</feature>
<feature type="binding site" evidence="1">
    <location>
        <position position="258"/>
    </location>
    <ligand>
        <name>substrate</name>
    </ligand>
</feature>
<feature type="modified residue" description="N6-carboxylysine" evidence="1">
    <location>
        <position position="97"/>
    </location>
</feature>
<comment type="function">
    <text evidence="1">Catalyzes the reversible cyclization of carbamoyl aspartate to dihydroorotate.</text>
</comment>
<comment type="catalytic activity">
    <reaction evidence="1">
        <text>(S)-dihydroorotate + H2O = N-carbamoyl-L-aspartate + H(+)</text>
        <dbReference type="Rhea" id="RHEA:24296"/>
        <dbReference type="ChEBI" id="CHEBI:15377"/>
        <dbReference type="ChEBI" id="CHEBI:15378"/>
        <dbReference type="ChEBI" id="CHEBI:30864"/>
        <dbReference type="ChEBI" id="CHEBI:32814"/>
        <dbReference type="EC" id="3.5.2.3"/>
    </reaction>
</comment>
<comment type="cofactor">
    <cofactor evidence="1">
        <name>Zn(2+)</name>
        <dbReference type="ChEBI" id="CHEBI:29105"/>
    </cofactor>
    <text evidence="1">Binds 2 Zn(2+) ions per subunit.</text>
</comment>
<comment type="pathway">
    <text evidence="1">Pyrimidine metabolism; UMP biosynthesis via de novo pathway; (S)-dihydroorotate from bicarbonate: step 3/3.</text>
</comment>
<comment type="subunit">
    <text evidence="1">Homodimer.</text>
</comment>
<comment type="similarity">
    <text evidence="1">Belongs to the metallo-dependent hydrolases superfamily. DHOase family. Class II DHOase subfamily.</text>
</comment>
<name>PYRC_HELHP</name>
<gene>
    <name evidence="1" type="primary">pyrC</name>
    <name type="ordered locus">HH_0614</name>
</gene>
<reference key="1">
    <citation type="journal article" date="2003" name="Proc. Natl. Acad. Sci. U.S.A.">
        <title>The complete genome sequence of the carcinogenic bacterium Helicobacter hepaticus.</title>
        <authorList>
            <person name="Suerbaum S."/>
            <person name="Josenhans C."/>
            <person name="Sterzenbach T."/>
            <person name="Drescher B."/>
            <person name="Brandt P."/>
            <person name="Bell M."/>
            <person name="Droege M."/>
            <person name="Fartmann B."/>
            <person name="Fischer H.-P."/>
            <person name="Ge Z."/>
            <person name="Hoerster A."/>
            <person name="Holland R."/>
            <person name="Klein K."/>
            <person name="Koenig J."/>
            <person name="Macko L."/>
            <person name="Mendz G.L."/>
            <person name="Nyakatura G."/>
            <person name="Schauer D.B."/>
            <person name="Shen Z."/>
            <person name="Weber J."/>
            <person name="Frosch M."/>
            <person name="Fox J.G."/>
        </authorList>
    </citation>
    <scope>NUCLEOTIDE SEQUENCE [LARGE SCALE GENOMIC DNA]</scope>
    <source>
        <strain>ATCC 51449 / 3B1</strain>
    </source>
</reference>
<sequence>MPQTLQLTNPMDMHLHLREGEMLSAILPFSANPFSAAVVMPNLKTPITTTAQALAYKRQILSLCSTSFEPLMSIFLTPDLDKQELIRAKEAGIHILKLYPKGSTTGSEKGVKEMLCEKTLHIFEIAQELGFILSIHGESNGFCMEREYEFLPIFAHIAQHFPRLRIIIEHMSDRRSLELIEQYPNLYATLTLHHITMNLDDVLGGGINPHHFCKPMLKTKKDQQALLQAALNAHPKVSFGSDSAPHLESAKLNSKGAAGIFSAPILLPALAEVFAFHNALDCLQTFISNRAIANYKLKHFPIKTITLERVENPVPPYINTPLGHIIPLRAQTNLSWRIKEENR</sequence>